<keyword id="KW-0007">Acetylation</keyword>
<keyword id="KW-0025">Alternative splicing</keyword>
<keyword id="KW-0175">Coiled coil</keyword>
<keyword id="KW-0963">Cytoplasm</keyword>
<keyword id="KW-0866">Nonsense-mediated mRNA decay</keyword>
<keyword id="KW-0539">Nucleus</keyword>
<keyword id="KW-0597">Phosphoprotein</keyword>
<keyword id="KW-1267">Proteomics identification</keyword>
<keyword id="KW-1185">Reference proteome</keyword>
<keyword id="KW-0694">RNA-binding</keyword>
<keyword id="KW-0810">Translation regulation</keyword>
<accession>Q9BRP8</accession>
<accession>B6ZDM5</accession>
<accession>Q8IXJ8</accession>
<accession>Q8N8E7</accession>
<feature type="chain" id="PRO_0000287285" description="Partner of Y14 and mago">
    <location>
        <begin position="1"/>
        <end position="204"/>
    </location>
</feature>
<feature type="region of interest" description="Required for interaction with MAGOH and RBM8A">
    <location>
        <begin position="1"/>
        <end position="33"/>
    </location>
</feature>
<feature type="region of interest" description="Disordered" evidence="3">
    <location>
        <begin position="1"/>
        <end position="32"/>
    </location>
</feature>
<feature type="region of interest" description="Disordered" evidence="3">
    <location>
        <begin position="55"/>
        <end position="151"/>
    </location>
</feature>
<feature type="region of interest" description="eIF2A-like">
    <location>
        <begin position="152"/>
        <end position="204"/>
    </location>
</feature>
<feature type="coiled-coil region" evidence="2">
    <location>
        <begin position="82"/>
        <end position="116"/>
    </location>
</feature>
<feature type="coiled-coil region" evidence="2">
    <location>
        <begin position="145"/>
        <end position="204"/>
    </location>
</feature>
<feature type="compositionally biased region" description="Basic residues" evidence="3">
    <location>
        <begin position="86"/>
        <end position="97"/>
    </location>
</feature>
<feature type="compositionally biased region" description="Basic and acidic residues" evidence="3">
    <location>
        <begin position="98"/>
        <end position="118"/>
    </location>
</feature>
<feature type="compositionally biased region" description="Polar residues" evidence="3">
    <location>
        <begin position="138"/>
        <end position="147"/>
    </location>
</feature>
<feature type="modified residue" description="N-acetylmethionine" evidence="11 12">
    <location>
        <position position="1"/>
    </location>
</feature>
<feature type="modified residue" description="Phosphoserine" evidence="12 13">
    <location>
        <position position="6"/>
    </location>
</feature>
<feature type="modified residue" description="Phosphoserine" evidence="10">
    <location>
        <position position="64"/>
    </location>
</feature>
<feature type="modified residue" description="Phosphothreonine" evidence="10">
    <location>
        <position position="72"/>
    </location>
</feature>
<feature type="modified residue" description="Phosphoserine" evidence="13">
    <location>
        <position position="117"/>
    </location>
</feature>
<feature type="splice variant" id="VSP_025430" description="In isoform 2." evidence="7">
    <original>MEAAGSPAATET</original>
    <variation>MATPYVTDETG</variation>
    <location>
        <begin position="1"/>
        <end position="12"/>
    </location>
</feature>
<feature type="sequence variant" id="VAR_032297" description="In dbSNP:rs3802998.">
    <original>E</original>
    <variation>Q</variation>
    <location>
        <position position="66"/>
    </location>
</feature>
<feature type="sequence conflict" description="In Ref. 1; CAD30677." evidence="8" ref="1">
    <original>T</original>
    <variation>S</variation>
    <location>
        <position position="147"/>
    </location>
</feature>
<comment type="function">
    <text evidence="5 6">Key regulator of the exon junction complex (EJC), a multiprotein complex that associates immediately upstream of the exon-exon junction on mRNAs and serves as a positional landmark for the intron exon structure of genes and directs post-transcriptional processes in the cytoplasm such as mRNA export, nonsense-mediated mRNA decay (NMD) or translation. Acts as an EJC disassembly factor, allowing translation-dependent EJC removal and recycling by disrupting mature EJC from spliced mRNAs. Its association with the 40S ribosomal subunit probably prevents a translation-independent disassembly of the EJC from spliced mRNAs, by restricting its activity to mRNAs that have been translated. Interferes with NMD and enhances translation of spliced mRNAs, probably by antagonizing EJC functions. May bind RNA; the relevance of RNA-binding remains unclear in vivo, RNA-binding was detected by PubMed:14968132, while PubMed:19410547 did not detect RNA-binding activity independently of the EJC.</text>
</comment>
<comment type="subunit">
    <text evidence="4 5 6">Interacts (via N-terminus) with MAGOH and RBM8A; the interaction is direct. Associates (eIF2A-like region) with the 40S ribosomal subunit and the 48S preinitiation complex.</text>
</comment>
<comment type="interaction">
    <interactant intactId="EBI-2352802">
        <id>Q9BRP8</id>
    </interactant>
    <interactant intactId="EBI-299134">
        <id>P61326</id>
        <label>MAGOH</label>
    </interactant>
    <organismsDiffer>false</organismsDiffer>
    <experiments>18</experiments>
</comment>
<comment type="interaction">
    <interactant intactId="EBI-2352802">
        <id>Q9BRP8</id>
    </interactant>
    <interactant intactId="EBI-752420">
        <id>Q9NUX5</id>
        <label>POT1</label>
    </interactant>
    <organismsDiffer>false</organismsDiffer>
    <experiments>2</experiments>
</comment>
<comment type="interaction">
    <interactant intactId="EBI-2352802">
        <id>Q9BRP8</id>
    </interactant>
    <interactant intactId="EBI-743502">
        <id>Q8WWV3</id>
        <label>RTN4IP1</label>
    </interactant>
    <organismsDiffer>false</organismsDiffer>
    <experiments>3</experiments>
</comment>
<comment type="interaction">
    <interactant intactId="EBI-2352802">
        <id>Q9BRP8</id>
    </interactant>
    <interactant intactId="EBI-10175746">
        <id>B2R9Y1</id>
    </interactant>
    <organismsDiffer>false</organismsDiffer>
    <experiments>3</experiments>
</comment>
<comment type="interaction">
    <interactant intactId="EBI-2352802">
        <id>Q9BRP8</id>
    </interactant>
    <interactant intactId="EBI-11687770">
        <id>Q68842</id>
        <label>HCV core</label>
    </interactant>
    <organismsDiffer>true</organismsDiffer>
    <experiments>2</experiments>
</comment>
<comment type="interaction">
    <interactant intactId="EBI-2352802">
        <id>Q9BRP8</id>
    </interactant>
    <interactant intactId="EBI-6884751">
        <id>Q2HR75</id>
        <label>ORF57</label>
    </interactant>
    <organismsDiffer>true</organismsDiffer>
    <experiments>4</experiments>
</comment>
<comment type="interaction">
    <interactant intactId="EBI-2352802">
        <id>Q9BRP8</id>
    </interactant>
    <interactant intactId="EBI-6858513">
        <id>PRO_0000045592</id>
        <dbReference type="UniProtKB" id="Q99IB8"/>
    </interactant>
    <organismsDiffer>true</organismsDiffer>
    <experiments>4</experiments>
</comment>
<comment type="subcellular location">
    <subcellularLocation>
        <location evidence="4 5">Cytoplasm</location>
    </subcellularLocation>
    <subcellularLocation>
        <location evidence="4">Nucleus</location>
        <location evidence="4">Nucleolus</location>
    </subcellularLocation>
    <subcellularLocation>
        <location evidence="4">Nucleus</location>
        <location evidence="4">Nucleoplasm</location>
    </subcellularLocation>
    <text evidence="4">Shuttles between the nucleus and the cytoplasm (PubMed:14968132). Nuclear export is mediated by XPO1/CRM1 (PubMed:14968132).</text>
</comment>
<comment type="alternative products">
    <event type="alternative splicing"/>
    <isoform>
        <id>Q9BRP8-1</id>
        <name>1</name>
        <sequence type="displayed"/>
    </isoform>
    <isoform>
        <id>Q9BRP8-2</id>
        <name>2</name>
        <sequence type="described" ref="VSP_025430"/>
    </isoform>
</comment>
<comment type="domain">
    <text evidence="5">The eIF2A-like region shares sequence similarity with eIF2A and mediates the interaction with the 40S ribosomal subunit and the 48S preinitiation complex.</text>
</comment>
<comment type="similarity">
    <text evidence="8">Belongs to the pym family.</text>
</comment>
<dbReference type="EMBL" id="AJ459406">
    <property type="protein sequence ID" value="CAD30677.1"/>
    <property type="molecule type" value="mRNA"/>
</dbReference>
<dbReference type="EMBL" id="AK096922">
    <property type="protein sequence ID" value="BAC04897.1"/>
    <property type="molecule type" value="mRNA"/>
</dbReference>
<dbReference type="EMBL" id="AC023055">
    <property type="status" value="NOT_ANNOTATED_CDS"/>
    <property type="molecule type" value="Genomic_DNA"/>
</dbReference>
<dbReference type="EMBL" id="AC025162">
    <property type="status" value="NOT_ANNOTATED_CDS"/>
    <property type="molecule type" value="Genomic_DNA"/>
</dbReference>
<dbReference type="EMBL" id="BC006135">
    <property type="protein sequence ID" value="AAH06135.1"/>
    <property type="molecule type" value="mRNA"/>
</dbReference>
<dbReference type="EMBL" id="BC014976">
    <property type="protein sequence ID" value="AAH14976.1"/>
    <property type="molecule type" value="mRNA"/>
</dbReference>
<dbReference type="CCDS" id="CCDS41795.1">
    <molecule id="Q9BRP8-1"/>
</dbReference>
<dbReference type="CCDS" id="CCDS44916.1">
    <molecule id="Q9BRP8-2"/>
</dbReference>
<dbReference type="RefSeq" id="NP_001137325.1">
    <molecule id="Q9BRP8-2"/>
    <property type="nucleotide sequence ID" value="NM_001143853.1"/>
</dbReference>
<dbReference type="RefSeq" id="NP_115721.1">
    <molecule id="Q9BRP8-1"/>
    <property type="nucleotide sequence ID" value="NM_032345.3"/>
</dbReference>
<dbReference type="SMR" id="Q9BRP8"/>
<dbReference type="BioGRID" id="124031">
    <property type="interactions" value="175"/>
</dbReference>
<dbReference type="CORUM" id="Q9BRP8"/>
<dbReference type="DIP" id="DIP-48413N"/>
<dbReference type="FunCoup" id="Q9BRP8">
    <property type="interactions" value="2303"/>
</dbReference>
<dbReference type="IntAct" id="Q9BRP8">
    <property type="interactions" value="65"/>
</dbReference>
<dbReference type="MINT" id="Q9BRP8"/>
<dbReference type="STRING" id="9606.ENSP00000386156"/>
<dbReference type="GlyGen" id="Q9BRP8">
    <property type="glycosylation" value="1 site"/>
</dbReference>
<dbReference type="iPTMnet" id="Q9BRP8"/>
<dbReference type="MetOSite" id="Q9BRP8"/>
<dbReference type="PhosphoSitePlus" id="Q9BRP8"/>
<dbReference type="BioMuta" id="PYM1"/>
<dbReference type="jPOST" id="Q9BRP8"/>
<dbReference type="MassIVE" id="Q9BRP8"/>
<dbReference type="PaxDb" id="9606-ENSP00000386156"/>
<dbReference type="PeptideAtlas" id="Q9BRP8"/>
<dbReference type="ProteomicsDB" id="78798">
    <molecule id="Q9BRP8-1"/>
</dbReference>
<dbReference type="ProteomicsDB" id="78799">
    <molecule id="Q9BRP8-2"/>
</dbReference>
<dbReference type="Pumba" id="Q9BRP8"/>
<dbReference type="Antibodypedia" id="48574">
    <property type="antibodies" value="235 antibodies from 20 providers"/>
</dbReference>
<dbReference type="DNASU" id="84305"/>
<dbReference type="Ensembl" id="ENST00000398213.4">
    <molecule id="Q9BRP8-2"/>
    <property type="protein sequence ID" value="ENSP00000381271.4"/>
    <property type="gene ID" value="ENSG00000170473.17"/>
</dbReference>
<dbReference type="Ensembl" id="ENST00000408946.7">
    <molecule id="Q9BRP8-1"/>
    <property type="protein sequence ID" value="ENSP00000386156.2"/>
    <property type="gene ID" value="ENSG00000170473.17"/>
</dbReference>
<dbReference type="GeneID" id="84305"/>
<dbReference type="KEGG" id="hsa:84305"/>
<dbReference type="MANE-Select" id="ENST00000408946.7">
    <property type="protein sequence ID" value="ENSP00000386156.2"/>
    <property type="RefSeq nucleotide sequence ID" value="NM_032345.3"/>
    <property type="RefSeq protein sequence ID" value="NP_115721.1"/>
</dbReference>
<dbReference type="UCSC" id="uc001sie.2">
    <molecule id="Q9BRP8-1"/>
    <property type="organism name" value="human"/>
</dbReference>
<dbReference type="AGR" id="HGNC:30258"/>
<dbReference type="CTD" id="84305"/>
<dbReference type="GeneCards" id="PYM1"/>
<dbReference type="HGNC" id="HGNC:30258">
    <property type="gene designation" value="PYM1"/>
</dbReference>
<dbReference type="HPA" id="ENSG00000170473">
    <property type="expression patterns" value="Low tissue specificity"/>
</dbReference>
<dbReference type="MIM" id="619753">
    <property type="type" value="gene"/>
</dbReference>
<dbReference type="neXtProt" id="NX_Q9BRP8"/>
<dbReference type="OpenTargets" id="ENSG00000170473"/>
<dbReference type="PharmGKB" id="PA142670574"/>
<dbReference type="VEuPathDB" id="HostDB:ENSG00000170473"/>
<dbReference type="eggNOG" id="KOG4325">
    <property type="taxonomic scope" value="Eukaryota"/>
</dbReference>
<dbReference type="GeneTree" id="ENSGT00730000111107"/>
<dbReference type="HOGENOM" id="CLU_074603_3_0_1"/>
<dbReference type="InParanoid" id="Q9BRP8"/>
<dbReference type="OMA" id="IPGCADS"/>
<dbReference type="OrthoDB" id="21625at2759"/>
<dbReference type="PAN-GO" id="Q9BRP8">
    <property type="GO annotations" value="4 GO annotations based on evolutionary models"/>
</dbReference>
<dbReference type="PhylomeDB" id="Q9BRP8"/>
<dbReference type="TreeFam" id="TF324615"/>
<dbReference type="PathwayCommons" id="Q9BRP8"/>
<dbReference type="SignaLink" id="Q9BRP8"/>
<dbReference type="BioGRID-ORCS" id="84305">
    <property type="hits" value="335 hits in 1148 CRISPR screens"/>
</dbReference>
<dbReference type="CD-CODE" id="91857CE7">
    <property type="entry name" value="Nucleolus"/>
</dbReference>
<dbReference type="ChiTaRS" id="PYM1">
    <property type="organism name" value="human"/>
</dbReference>
<dbReference type="GenomeRNAi" id="84305"/>
<dbReference type="Pharos" id="Q9BRP8">
    <property type="development level" value="Tbio"/>
</dbReference>
<dbReference type="PRO" id="PR:Q9BRP8"/>
<dbReference type="Proteomes" id="UP000005640">
    <property type="component" value="Chromosome 12"/>
</dbReference>
<dbReference type="RNAct" id="Q9BRP8">
    <property type="molecule type" value="protein"/>
</dbReference>
<dbReference type="Bgee" id="ENSG00000170473">
    <property type="expression patterns" value="Expressed in lower esophagus mucosa and 182 other cell types or tissues"/>
</dbReference>
<dbReference type="ExpressionAtlas" id="Q9BRP8">
    <property type="expression patterns" value="baseline and differential"/>
</dbReference>
<dbReference type="GO" id="GO:0030054">
    <property type="term" value="C:cell junction"/>
    <property type="evidence" value="ECO:0000314"/>
    <property type="project" value="HPA"/>
</dbReference>
<dbReference type="GO" id="GO:0005737">
    <property type="term" value="C:cytoplasm"/>
    <property type="evidence" value="ECO:0000318"/>
    <property type="project" value="GO_Central"/>
</dbReference>
<dbReference type="GO" id="GO:0005829">
    <property type="term" value="C:cytosol"/>
    <property type="evidence" value="ECO:0000314"/>
    <property type="project" value="HPA"/>
</dbReference>
<dbReference type="GO" id="GO:0035145">
    <property type="term" value="C:exon-exon junction complex"/>
    <property type="evidence" value="ECO:0000314"/>
    <property type="project" value="UniProtKB"/>
</dbReference>
<dbReference type="GO" id="GO:0005730">
    <property type="term" value="C:nucleolus"/>
    <property type="evidence" value="ECO:0000314"/>
    <property type="project" value="HPA"/>
</dbReference>
<dbReference type="GO" id="GO:0005654">
    <property type="term" value="C:nucleoplasm"/>
    <property type="evidence" value="ECO:0000314"/>
    <property type="project" value="HPA"/>
</dbReference>
<dbReference type="GO" id="GO:0043022">
    <property type="term" value="F:ribosome binding"/>
    <property type="evidence" value="ECO:0000314"/>
    <property type="project" value="UniProtKB"/>
</dbReference>
<dbReference type="GO" id="GO:0003723">
    <property type="term" value="F:RNA binding"/>
    <property type="evidence" value="ECO:0007005"/>
    <property type="project" value="UniProtKB"/>
</dbReference>
<dbReference type="GO" id="GO:1903259">
    <property type="term" value="P:exon-exon junction complex disassembly"/>
    <property type="evidence" value="ECO:0000314"/>
    <property type="project" value="HGNC"/>
</dbReference>
<dbReference type="GO" id="GO:0000184">
    <property type="term" value="P:nuclear-transcribed mRNA catabolic process, nonsense-mediated decay"/>
    <property type="evidence" value="ECO:0000314"/>
    <property type="project" value="UniProtKB"/>
</dbReference>
<dbReference type="GO" id="GO:0045727">
    <property type="term" value="P:positive regulation of translation"/>
    <property type="evidence" value="ECO:0000314"/>
    <property type="project" value="UniProtKB"/>
</dbReference>
<dbReference type="InterPro" id="IPR039333">
    <property type="entry name" value="PYM1"/>
</dbReference>
<dbReference type="InterPro" id="IPR015362">
    <property type="entry name" value="WIBG_mago-bd"/>
</dbReference>
<dbReference type="InterPro" id="IPR036348">
    <property type="entry name" value="WIBG_N_sf"/>
</dbReference>
<dbReference type="PANTHER" id="PTHR22959:SF0">
    <property type="entry name" value="PARTNER OF Y14 AND MAGO"/>
    <property type="match status" value="1"/>
</dbReference>
<dbReference type="PANTHER" id="PTHR22959">
    <property type="entry name" value="PYM PROTEIN"/>
    <property type="match status" value="1"/>
</dbReference>
<dbReference type="Pfam" id="PF09282">
    <property type="entry name" value="Mago-bind"/>
    <property type="match status" value="1"/>
</dbReference>
<dbReference type="SMART" id="SM01273">
    <property type="entry name" value="Mago-bind"/>
    <property type="match status" value="1"/>
</dbReference>
<dbReference type="SUPFAM" id="SSF101931">
    <property type="entry name" value="Pym (Within the bgcn gene intron protein, WIBG), N-terminal domain"/>
    <property type="match status" value="1"/>
</dbReference>
<organism>
    <name type="scientific">Homo sapiens</name>
    <name type="common">Human</name>
    <dbReference type="NCBI Taxonomy" id="9606"/>
    <lineage>
        <taxon>Eukaryota</taxon>
        <taxon>Metazoa</taxon>
        <taxon>Chordata</taxon>
        <taxon>Craniata</taxon>
        <taxon>Vertebrata</taxon>
        <taxon>Euteleostomi</taxon>
        <taxon>Mammalia</taxon>
        <taxon>Eutheria</taxon>
        <taxon>Euarchontoglires</taxon>
        <taxon>Primates</taxon>
        <taxon>Haplorrhini</taxon>
        <taxon>Catarrhini</taxon>
        <taxon>Hominidae</taxon>
        <taxon>Homo</taxon>
    </lineage>
</organism>
<gene>
    <name evidence="9" type="primary">PYM1</name>
    <name type="synonym">PYM</name>
    <name type="synonym">WIBG</name>
</gene>
<reference key="1">
    <citation type="journal article" date="2002" name="J. Cell Biol.">
        <title>REF1/Aly and the additional exon junction complex proteins are dispensable for nuclear mRNA export.</title>
        <authorList>
            <person name="Gatfield D."/>
            <person name="Izaurralde E."/>
        </authorList>
    </citation>
    <scope>NUCLEOTIDE SEQUENCE [MRNA] (ISOFORM 1)</scope>
</reference>
<reference key="2">
    <citation type="journal article" date="2004" name="Nat. Genet.">
        <title>Complete sequencing and characterization of 21,243 full-length human cDNAs.</title>
        <authorList>
            <person name="Ota T."/>
            <person name="Suzuki Y."/>
            <person name="Nishikawa T."/>
            <person name="Otsuki T."/>
            <person name="Sugiyama T."/>
            <person name="Irie R."/>
            <person name="Wakamatsu A."/>
            <person name="Hayashi K."/>
            <person name="Sato H."/>
            <person name="Nagai K."/>
            <person name="Kimura K."/>
            <person name="Makita H."/>
            <person name="Sekine M."/>
            <person name="Obayashi M."/>
            <person name="Nishi T."/>
            <person name="Shibahara T."/>
            <person name="Tanaka T."/>
            <person name="Ishii S."/>
            <person name="Yamamoto J."/>
            <person name="Saito K."/>
            <person name="Kawai Y."/>
            <person name="Isono Y."/>
            <person name="Nakamura Y."/>
            <person name="Nagahari K."/>
            <person name="Murakami K."/>
            <person name="Yasuda T."/>
            <person name="Iwayanagi T."/>
            <person name="Wagatsuma M."/>
            <person name="Shiratori A."/>
            <person name="Sudo H."/>
            <person name="Hosoiri T."/>
            <person name="Kaku Y."/>
            <person name="Kodaira H."/>
            <person name="Kondo H."/>
            <person name="Sugawara M."/>
            <person name="Takahashi M."/>
            <person name="Kanda K."/>
            <person name="Yokoi T."/>
            <person name="Furuya T."/>
            <person name="Kikkawa E."/>
            <person name="Omura Y."/>
            <person name="Abe K."/>
            <person name="Kamihara K."/>
            <person name="Katsuta N."/>
            <person name="Sato K."/>
            <person name="Tanikawa M."/>
            <person name="Yamazaki M."/>
            <person name="Ninomiya K."/>
            <person name="Ishibashi T."/>
            <person name="Yamashita H."/>
            <person name="Murakawa K."/>
            <person name="Fujimori K."/>
            <person name="Tanai H."/>
            <person name="Kimata M."/>
            <person name="Watanabe M."/>
            <person name="Hiraoka S."/>
            <person name="Chiba Y."/>
            <person name="Ishida S."/>
            <person name="Ono Y."/>
            <person name="Takiguchi S."/>
            <person name="Watanabe S."/>
            <person name="Yosida M."/>
            <person name="Hotuta T."/>
            <person name="Kusano J."/>
            <person name="Kanehori K."/>
            <person name="Takahashi-Fujii A."/>
            <person name="Hara H."/>
            <person name="Tanase T.-O."/>
            <person name="Nomura Y."/>
            <person name="Togiya S."/>
            <person name="Komai F."/>
            <person name="Hara R."/>
            <person name="Takeuchi K."/>
            <person name="Arita M."/>
            <person name="Imose N."/>
            <person name="Musashino K."/>
            <person name="Yuuki H."/>
            <person name="Oshima A."/>
            <person name="Sasaki N."/>
            <person name="Aotsuka S."/>
            <person name="Yoshikawa Y."/>
            <person name="Matsunawa H."/>
            <person name="Ichihara T."/>
            <person name="Shiohata N."/>
            <person name="Sano S."/>
            <person name="Moriya S."/>
            <person name="Momiyama H."/>
            <person name="Satoh N."/>
            <person name="Takami S."/>
            <person name="Terashima Y."/>
            <person name="Suzuki O."/>
            <person name="Nakagawa S."/>
            <person name="Senoh A."/>
            <person name="Mizoguchi H."/>
            <person name="Goto Y."/>
            <person name="Shimizu F."/>
            <person name="Wakebe H."/>
            <person name="Hishigaki H."/>
            <person name="Watanabe T."/>
            <person name="Sugiyama A."/>
            <person name="Takemoto M."/>
            <person name="Kawakami B."/>
            <person name="Yamazaki M."/>
            <person name="Watanabe K."/>
            <person name="Kumagai A."/>
            <person name="Itakura S."/>
            <person name="Fukuzumi Y."/>
            <person name="Fujimori Y."/>
            <person name="Komiyama M."/>
            <person name="Tashiro H."/>
            <person name="Tanigami A."/>
            <person name="Fujiwara T."/>
            <person name="Ono T."/>
            <person name="Yamada K."/>
            <person name="Fujii Y."/>
            <person name="Ozaki K."/>
            <person name="Hirao M."/>
            <person name="Ohmori Y."/>
            <person name="Kawabata A."/>
            <person name="Hikiji T."/>
            <person name="Kobatake N."/>
            <person name="Inagaki H."/>
            <person name="Ikema Y."/>
            <person name="Okamoto S."/>
            <person name="Okitani R."/>
            <person name="Kawakami T."/>
            <person name="Noguchi S."/>
            <person name="Itoh T."/>
            <person name="Shigeta K."/>
            <person name="Senba T."/>
            <person name="Matsumura K."/>
            <person name="Nakajima Y."/>
            <person name="Mizuno T."/>
            <person name="Morinaga M."/>
            <person name="Sasaki M."/>
            <person name="Togashi T."/>
            <person name="Oyama M."/>
            <person name="Hata H."/>
            <person name="Watanabe M."/>
            <person name="Komatsu T."/>
            <person name="Mizushima-Sugano J."/>
            <person name="Satoh T."/>
            <person name="Shirai Y."/>
            <person name="Takahashi Y."/>
            <person name="Nakagawa K."/>
            <person name="Okumura K."/>
            <person name="Nagase T."/>
            <person name="Nomura N."/>
            <person name="Kikuchi H."/>
            <person name="Masuho Y."/>
            <person name="Yamashita R."/>
            <person name="Nakai K."/>
            <person name="Yada T."/>
            <person name="Nakamura Y."/>
            <person name="Ohara O."/>
            <person name="Isogai T."/>
            <person name="Sugano S."/>
        </authorList>
    </citation>
    <scope>NUCLEOTIDE SEQUENCE [LARGE SCALE MRNA] (ISOFORM 2)</scope>
</reference>
<reference key="3">
    <citation type="journal article" date="2006" name="Nature">
        <title>The finished DNA sequence of human chromosome 12.</title>
        <authorList>
            <person name="Scherer S.E."/>
            <person name="Muzny D.M."/>
            <person name="Buhay C.J."/>
            <person name="Chen R."/>
            <person name="Cree A."/>
            <person name="Ding Y."/>
            <person name="Dugan-Rocha S."/>
            <person name="Gill R."/>
            <person name="Gunaratne P."/>
            <person name="Harris R.A."/>
            <person name="Hawes A.C."/>
            <person name="Hernandez J."/>
            <person name="Hodgson A.V."/>
            <person name="Hume J."/>
            <person name="Jackson A."/>
            <person name="Khan Z.M."/>
            <person name="Kovar-Smith C."/>
            <person name="Lewis L.R."/>
            <person name="Lozado R.J."/>
            <person name="Metzker M.L."/>
            <person name="Milosavljevic A."/>
            <person name="Miner G.R."/>
            <person name="Montgomery K.T."/>
            <person name="Morgan M.B."/>
            <person name="Nazareth L.V."/>
            <person name="Scott G."/>
            <person name="Sodergren E."/>
            <person name="Song X.-Z."/>
            <person name="Steffen D."/>
            <person name="Lovering R.C."/>
            <person name="Wheeler D.A."/>
            <person name="Worley K.C."/>
            <person name="Yuan Y."/>
            <person name="Zhang Z."/>
            <person name="Adams C.Q."/>
            <person name="Ansari-Lari M.A."/>
            <person name="Ayele M."/>
            <person name="Brown M.J."/>
            <person name="Chen G."/>
            <person name="Chen Z."/>
            <person name="Clerc-Blankenburg K.P."/>
            <person name="Davis C."/>
            <person name="Delgado O."/>
            <person name="Dinh H.H."/>
            <person name="Draper H."/>
            <person name="Gonzalez-Garay M.L."/>
            <person name="Havlak P."/>
            <person name="Jackson L.R."/>
            <person name="Jacob L.S."/>
            <person name="Kelly S.H."/>
            <person name="Li L."/>
            <person name="Li Z."/>
            <person name="Liu J."/>
            <person name="Liu W."/>
            <person name="Lu J."/>
            <person name="Maheshwari M."/>
            <person name="Nguyen B.-V."/>
            <person name="Okwuonu G.O."/>
            <person name="Pasternak S."/>
            <person name="Perez L.M."/>
            <person name="Plopper F.J.H."/>
            <person name="Santibanez J."/>
            <person name="Shen H."/>
            <person name="Tabor P.E."/>
            <person name="Verduzco D."/>
            <person name="Waldron L."/>
            <person name="Wang Q."/>
            <person name="Williams G.A."/>
            <person name="Zhang J."/>
            <person name="Zhou J."/>
            <person name="Allen C.C."/>
            <person name="Amin A.G."/>
            <person name="Anyalebechi V."/>
            <person name="Bailey M."/>
            <person name="Barbaria J.A."/>
            <person name="Bimage K.E."/>
            <person name="Bryant N.P."/>
            <person name="Burch P.E."/>
            <person name="Burkett C.E."/>
            <person name="Burrell K.L."/>
            <person name="Calderon E."/>
            <person name="Cardenas V."/>
            <person name="Carter K."/>
            <person name="Casias K."/>
            <person name="Cavazos I."/>
            <person name="Cavazos S.R."/>
            <person name="Ceasar H."/>
            <person name="Chacko J."/>
            <person name="Chan S.N."/>
            <person name="Chavez D."/>
            <person name="Christopoulos C."/>
            <person name="Chu J."/>
            <person name="Cockrell R."/>
            <person name="Cox C.D."/>
            <person name="Dang M."/>
            <person name="Dathorne S.R."/>
            <person name="David R."/>
            <person name="Davis C.M."/>
            <person name="Davy-Carroll L."/>
            <person name="Deshazo D.R."/>
            <person name="Donlin J.E."/>
            <person name="D'Souza L."/>
            <person name="Eaves K.A."/>
            <person name="Egan A."/>
            <person name="Emery-Cohen A.J."/>
            <person name="Escotto M."/>
            <person name="Flagg N."/>
            <person name="Forbes L.D."/>
            <person name="Gabisi A.M."/>
            <person name="Garza M."/>
            <person name="Hamilton C."/>
            <person name="Henderson N."/>
            <person name="Hernandez O."/>
            <person name="Hines S."/>
            <person name="Hogues M.E."/>
            <person name="Huang M."/>
            <person name="Idlebird D.G."/>
            <person name="Johnson R."/>
            <person name="Jolivet A."/>
            <person name="Jones S."/>
            <person name="Kagan R."/>
            <person name="King L.M."/>
            <person name="Leal B."/>
            <person name="Lebow H."/>
            <person name="Lee S."/>
            <person name="LeVan J.M."/>
            <person name="Lewis L.C."/>
            <person name="London P."/>
            <person name="Lorensuhewa L.M."/>
            <person name="Loulseged H."/>
            <person name="Lovett D.A."/>
            <person name="Lucier A."/>
            <person name="Lucier R.L."/>
            <person name="Ma J."/>
            <person name="Madu R.C."/>
            <person name="Mapua P."/>
            <person name="Martindale A.D."/>
            <person name="Martinez E."/>
            <person name="Massey E."/>
            <person name="Mawhiney S."/>
            <person name="Meador M.G."/>
            <person name="Mendez S."/>
            <person name="Mercado C."/>
            <person name="Mercado I.C."/>
            <person name="Merritt C.E."/>
            <person name="Miner Z.L."/>
            <person name="Minja E."/>
            <person name="Mitchell T."/>
            <person name="Mohabbat F."/>
            <person name="Mohabbat K."/>
            <person name="Montgomery B."/>
            <person name="Moore N."/>
            <person name="Morris S."/>
            <person name="Munidasa M."/>
            <person name="Ngo R.N."/>
            <person name="Nguyen N.B."/>
            <person name="Nickerson E."/>
            <person name="Nwaokelemeh O.O."/>
            <person name="Nwokenkwo S."/>
            <person name="Obregon M."/>
            <person name="Oguh M."/>
            <person name="Oragunye N."/>
            <person name="Oviedo R.J."/>
            <person name="Parish B.J."/>
            <person name="Parker D.N."/>
            <person name="Parrish J."/>
            <person name="Parks K.L."/>
            <person name="Paul H.A."/>
            <person name="Payton B.A."/>
            <person name="Perez A."/>
            <person name="Perrin W."/>
            <person name="Pickens A."/>
            <person name="Primus E.L."/>
            <person name="Pu L.-L."/>
            <person name="Puazo M."/>
            <person name="Quiles M.M."/>
            <person name="Quiroz J.B."/>
            <person name="Rabata D."/>
            <person name="Reeves K."/>
            <person name="Ruiz S.J."/>
            <person name="Shao H."/>
            <person name="Sisson I."/>
            <person name="Sonaike T."/>
            <person name="Sorelle R.P."/>
            <person name="Sutton A.E."/>
            <person name="Svatek A.F."/>
            <person name="Svetz L.A."/>
            <person name="Tamerisa K.S."/>
            <person name="Taylor T.R."/>
            <person name="Teague B."/>
            <person name="Thomas N."/>
            <person name="Thorn R.D."/>
            <person name="Trejos Z.Y."/>
            <person name="Trevino B.K."/>
            <person name="Ukegbu O.N."/>
            <person name="Urban J.B."/>
            <person name="Vasquez L.I."/>
            <person name="Vera V.A."/>
            <person name="Villasana D.M."/>
            <person name="Wang L."/>
            <person name="Ward-Moore S."/>
            <person name="Warren J.T."/>
            <person name="Wei X."/>
            <person name="White F."/>
            <person name="Williamson A.L."/>
            <person name="Wleczyk R."/>
            <person name="Wooden H.S."/>
            <person name="Wooden S.H."/>
            <person name="Yen J."/>
            <person name="Yoon L."/>
            <person name="Yoon V."/>
            <person name="Zorrilla S.E."/>
            <person name="Nelson D."/>
            <person name="Kucherlapati R."/>
            <person name="Weinstock G."/>
            <person name="Gibbs R.A."/>
        </authorList>
    </citation>
    <scope>NUCLEOTIDE SEQUENCE [LARGE SCALE GENOMIC DNA]</scope>
</reference>
<reference key="4">
    <citation type="journal article" date="2004" name="Genome Res.">
        <title>The status, quality, and expansion of the NIH full-length cDNA project: the Mammalian Gene Collection (MGC).</title>
        <authorList>
            <consortium name="The MGC Project Team"/>
        </authorList>
    </citation>
    <scope>NUCLEOTIDE SEQUENCE [LARGE SCALE MRNA] (ISOFORM 1)</scope>
    <source>
        <tissue>B-cell</tissue>
        <tissue>Pancreas</tissue>
    </source>
</reference>
<reference key="5">
    <citation type="journal article" date="2004" name="EMBO Rep.">
        <title>Molecular insights into the interaction of PYM with the Mago-Y14 core of the exon junction complex.</title>
        <authorList>
            <person name="Bono F."/>
            <person name="Ebert J."/>
            <person name="Unterholzner L."/>
            <person name="Guettler T."/>
            <person name="Izaurralde E."/>
            <person name="Conti E."/>
        </authorList>
    </citation>
    <scope>SUBCELLULAR LOCATION</scope>
    <scope>INTERACTION WITH MAGOH AND RBM8A</scope>
    <scope>RNA-BINDING</scope>
</reference>
<reference key="6">
    <citation type="journal article" date="2007" name="Nat. Struct. Mol. Biol.">
        <title>PYM binds the cytoplasmic exon-junction complex and ribosomes to enhance translation of spliced mRNAs.</title>
        <authorList>
            <person name="Diem M.D."/>
            <person name="Chan C.C."/>
            <person name="Younis I."/>
            <person name="Dreyfuss G."/>
        </authorList>
    </citation>
    <scope>FUNCTION</scope>
    <scope>SUBCELLULAR LOCATION</scope>
    <scope>DOMAIN EIF2A-LIKE</scope>
    <scope>INTERACTION WITH MAGOH; RBM8A AND RIBOSOME</scope>
</reference>
<reference key="7">
    <citation type="journal article" date="2008" name="Proc. Natl. Acad. Sci. U.S.A.">
        <title>A quantitative atlas of mitotic phosphorylation.</title>
        <authorList>
            <person name="Dephoure N."/>
            <person name="Zhou C."/>
            <person name="Villen J."/>
            <person name="Beausoleil S.A."/>
            <person name="Bakalarski C.E."/>
            <person name="Elledge S.J."/>
            <person name="Gygi S.P."/>
        </authorList>
    </citation>
    <scope>PHOSPHORYLATION [LARGE SCALE ANALYSIS] AT SER-64 AND THR-72</scope>
    <scope>IDENTIFICATION BY MASS SPECTROMETRY [LARGE SCALE ANALYSIS]</scope>
    <source>
        <tissue>Cervix carcinoma</tissue>
    </source>
</reference>
<reference key="8">
    <citation type="journal article" date="2009" name="Anal. Chem.">
        <title>Lys-N and trypsin cover complementary parts of the phosphoproteome in a refined SCX-based approach.</title>
        <authorList>
            <person name="Gauci S."/>
            <person name="Helbig A.O."/>
            <person name="Slijper M."/>
            <person name="Krijgsveld J."/>
            <person name="Heck A.J."/>
            <person name="Mohammed S."/>
        </authorList>
    </citation>
    <scope>ACETYLATION [LARGE SCALE ANALYSIS] AT MET-1</scope>
    <scope>IDENTIFICATION BY MASS SPECTROMETRY [LARGE SCALE ANALYSIS]</scope>
</reference>
<reference key="9">
    <citation type="journal article" date="2009" name="Cell">
        <title>Disassembly of exon junction complexes by PYM.</title>
        <authorList>
            <person name="Gehring N.H."/>
            <person name="Lamprinaki S."/>
            <person name="Kulozik A.E."/>
            <person name="Hentze M.W."/>
        </authorList>
    </citation>
    <scope>FUNCTION</scope>
    <scope>INTERACTION WITH MAGOH; RBM8A AND RIBOSOME</scope>
</reference>
<reference key="10">
    <citation type="journal article" date="2010" name="Sci. Signal.">
        <title>Quantitative phosphoproteomics reveals widespread full phosphorylation site occupancy during mitosis.</title>
        <authorList>
            <person name="Olsen J.V."/>
            <person name="Vermeulen M."/>
            <person name="Santamaria A."/>
            <person name="Kumar C."/>
            <person name="Miller M.L."/>
            <person name="Jensen L.J."/>
            <person name="Gnad F."/>
            <person name="Cox J."/>
            <person name="Jensen T.S."/>
            <person name="Nigg E.A."/>
            <person name="Brunak S."/>
            <person name="Mann M."/>
        </authorList>
    </citation>
    <scope>ACETYLATION [LARGE SCALE ANALYSIS] AT MET-1</scope>
    <scope>PHOSPHORYLATION [LARGE SCALE ANALYSIS] AT SER-6</scope>
    <scope>IDENTIFICATION BY MASS SPECTROMETRY [LARGE SCALE ANALYSIS]</scope>
    <source>
        <tissue>Cervix carcinoma</tissue>
    </source>
</reference>
<reference key="11">
    <citation type="journal article" date="2011" name="BMC Syst. Biol.">
        <title>Initial characterization of the human central proteome.</title>
        <authorList>
            <person name="Burkard T.R."/>
            <person name="Planyavsky M."/>
            <person name="Kaupe I."/>
            <person name="Breitwieser F.P."/>
            <person name="Buerckstuemmer T."/>
            <person name="Bennett K.L."/>
            <person name="Superti-Furga G."/>
            <person name="Colinge J."/>
        </authorList>
    </citation>
    <scope>IDENTIFICATION BY MASS SPECTROMETRY [LARGE SCALE ANALYSIS]</scope>
</reference>
<reference key="12">
    <citation type="journal article" date="2013" name="J. Proteome Res.">
        <title>Toward a comprehensive characterization of a human cancer cell phosphoproteome.</title>
        <authorList>
            <person name="Zhou H."/>
            <person name="Di Palma S."/>
            <person name="Preisinger C."/>
            <person name="Peng M."/>
            <person name="Polat A.N."/>
            <person name="Heck A.J."/>
            <person name="Mohammed S."/>
        </authorList>
    </citation>
    <scope>PHOSPHORYLATION [LARGE SCALE ANALYSIS] AT SER-6 AND SER-117</scope>
    <scope>IDENTIFICATION BY MASS SPECTROMETRY [LARGE SCALE ANALYSIS]</scope>
    <source>
        <tissue>Cervix carcinoma</tissue>
        <tissue>Erythroleukemia</tissue>
    </source>
</reference>
<reference key="13">
    <citation type="journal article" date="2014" name="J. Proteomics">
        <title>An enzyme assisted RP-RPLC approach for in-depth analysis of human liver phosphoproteome.</title>
        <authorList>
            <person name="Bian Y."/>
            <person name="Song C."/>
            <person name="Cheng K."/>
            <person name="Dong M."/>
            <person name="Wang F."/>
            <person name="Huang J."/>
            <person name="Sun D."/>
            <person name="Wang L."/>
            <person name="Ye M."/>
            <person name="Zou H."/>
        </authorList>
    </citation>
    <scope>IDENTIFICATION BY MASS SPECTROMETRY [LARGE SCALE ANALYSIS]</scope>
    <source>
        <tissue>Liver</tissue>
    </source>
</reference>
<name>PYM1_HUMAN</name>
<evidence type="ECO:0000250" key="1">
    <source>
        <dbReference type="UniProtKB" id="P82804"/>
    </source>
</evidence>
<evidence type="ECO:0000255" key="2"/>
<evidence type="ECO:0000256" key="3">
    <source>
        <dbReference type="SAM" id="MobiDB-lite"/>
    </source>
</evidence>
<evidence type="ECO:0000269" key="4">
    <source>
    </source>
</evidence>
<evidence type="ECO:0000269" key="5">
    <source>
    </source>
</evidence>
<evidence type="ECO:0000269" key="6">
    <source>
    </source>
</evidence>
<evidence type="ECO:0000303" key="7">
    <source>
    </source>
</evidence>
<evidence type="ECO:0000305" key="8"/>
<evidence type="ECO:0000312" key="9">
    <source>
        <dbReference type="HGNC" id="HGNC:30258"/>
    </source>
</evidence>
<evidence type="ECO:0007744" key="10">
    <source>
    </source>
</evidence>
<evidence type="ECO:0007744" key="11">
    <source>
    </source>
</evidence>
<evidence type="ECO:0007744" key="12">
    <source>
    </source>
</evidence>
<evidence type="ECO:0007744" key="13">
    <source>
    </source>
</evidence>
<protein>
    <recommendedName>
        <fullName evidence="1">Partner of Y14 and mago</fullName>
    </recommendedName>
    <alternativeName>
        <fullName evidence="9">PYM homolog 1 exon junction complex-associated factor</fullName>
    </alternativeName>
    <alternativeName>
        <fullName>Protein wibg homolog</fullName>
    </alternativeName>
</protein>
<sequence>MEAAGSPAATETGKYIASTQRPDGTWRKQRRVKEGYVPQEEVPVYENKYVKFFKSKPELPPGLSPEATAPVTPSRPEGGEPGLSKTAKRNLKRKEKRRQQQEKGEAEALSRTLDKVSLEETAQLPSAPQGSRAAPTAASDQPDSAATTEKAKKIKNLKKKLRQVEELQQRIQAGEVSQPSKEQLEKLARRRALEEELEDLELGL</sequence>
<proteinExistence type="evidence at protein level"/>